<dbReference type="EMBL" id="X61240">
    <property type="protein sequence ID" value="CAA43572.1"/>
    <property type="molecule type" value="Genomic_DNA"/>
</dbReference>
<dbReference type="PIR" id="S08442">
    <property type="entry name" value="S08442"/>
</dbReference>
<dbReference type="PIR" id="S24571">
    <property type="entry name" value="S24571"/>
</dbReference>
<dbReference type="SMR" id="P15831"/>
<dbReference type="GlyCosmos" id="P15831">
    <property type="glycosylation" value="28 sites, No reported glycans"/>
</dbReference>
<dbReference type="Proteomes" id="UP000247120">
    <property type="component" value="Segment"/>
</dbReference>
<dbReference type="GO" id="GO:0044175">
    <property type="term" value="C:host cell endosome membrane"/>
    <property type="evidence" value="ECO:0007669"/>
    <property type="project" value="UniProtKB-SubCell"/>
</dbReference>
<dbReference type="GO" id="GO:0020002">
    <property type="term" value="C:host cell plasma membrane"/>
    <property type="evidence" value="ECO:0007669"/>
    <property type="project" value="UniProtKB-SubCell"/>
</dbReference>
<dbReference type="GO" id="GO:0016020">
    <property type="term" value="C:membrane"/>
    <property type="evidence" value="ECO:0007669"/>
    <property type="project" value="UniProtKB-KW"/>
</dbReference>
<dbReference type="GO" id="GO:0019031">
    <property type="term" value="C:viral envelope"/>
    <property type="evidence" value="ECO:0007669"/>
    <property type="project" value="UniProtKB-KW"/>
</dbReference>
<dbReference type="GO" id="GO:0055036">
    <property type="term" value="C:virion membrane"/>
    <property type="evidence" value="ECO:0007669"/>
    <property type="project" value="UniProtKB-SubCell"/>
</dbReference>
<dbReference type="GO" id="GO:0005198">
    <property type="term" value="F:structural molecule activity"/>
    <property type="evidence" value="ECO:0007669"/>
    <property type="project" value="InterPro"/>
</dbReference>
<dbReference type="GO" id="GO:0075512">
    <property type="term" value="P:clathrin-dependent endocytosis of virus by host cell"/>
    <property type="evidence" value="ECO:0007669"/>
    <property type="project" value="UniProtKB-KW"/>
</dbReference>
<dbReference type="GO" id="GO:0039654">
    <property type="term" value="P:fusion of virus membrane with host endosome membrane"/>
    <property type="evidence" value="ECO:0007669"/>
    <property type="project" value="UniProtKB-KW"/>
</dbReference>
<dbReference type="GO" id="GO:0052170">
    <property type="term" value="P:symbiont-mediated suppression of host innate immune response"/>
    <property type="evidence" value="ECO:0007669"/>
    <property type="project" value="UniProtKB-KW"/>
</dbReference>
<dbReference type="GO" id="GO:0039587">
    <property type="term" value="P:symbiont-mediated-mediated suppression of host tetherin activity"/>
    <property type="evidence" value="ECO:0007669"/>
    <property type="project" value="UniProtKB-KW"/>
</dbReference>
<dbReference type="GO" id="GO:0019062">
    <property type="term" value="P:virion attachment to host cell"/>
    <property type="evidence" value="ECO:0007669"/>
    <property type="project" value="UniProtKB-KW"/>
</dbReference>
<dbReference type="CDD" id="cd09909">
    <property type="entry name" value="HIV-1-like_HR1-HR2"/>
    <property type="match status" value="1"/>
</dbReference>
<dbReference type="Gene3D" id="1.10.287.210">
    <property type="match status" value="1"/>
</dbReference>
<dbReference type="Gene3D" id="2.170.40.20">
    <property type="entry name" value="Human immunodeficiency virus 1, Gp160, envelope glycoprotein"/>
    <property type="match status" value="2"/>
</dbReference>
<dbReference type="InterPro" id="IPR036377">
    <property type="entry name" value="Gp120_core_sf"/>
</dbReference>
<dbReference type="InterPro" id="IPR000328">
    <property type="entry name" value="GP41-like"/>
</dbReference>
<dbReference type="InterPro" id="IPR000777">
    <property type="entry name" value="HIV1_Gp120"/>
</dbReference>
<dbReference type="Pfam" id="PF00516">
    <property type="entry name" value="GP120"/>
    <property type="match status" value="1"/>
</dbReference>
<dbReference type="Pfam" id="PF00517">
    <property type="entry name" value="GP41"/>
    <property type="match status" value="1"/>
</dbReference>
<dbReference type="SUPFAM" id="SSF56502">
    <property type="entry name" value="gp120 core"/>
    <property type="match status" value="1"/>
</dbReference>
<dbReference type="SUPFAM" id="SSF58069">
    <property type="entry name" value="Virus ectodomain"/>
    <property type="match status" value="1"/>
</dbReference>
<feature type="signal peptide" evidence="2">
    <location>
        <begin position="1"/>
        <end position="23"/>
    </location>
</feature>
<feature type="chain" id="PRO_0000239498" description="Envelope glycoprotein gp160">
    <location>
        <begin position="24"/>
        <end position="859"/>
    </location>
</feature>
<feature type="chain" id="PRO_0000038439" description="Surface protein gp120" evidence="1">
    <location>
        <begin position="24"/>
        <end position="513"/>
    </location>
</feature>
<feature type="chain" id="PRO_0000038440" description="Transmembrane protein gp41" evidence="1">
    <location>
        <begin position="514"/>
        <end position="859"/>
    </location>
</feature>
<feature type="topological domain" description="Extracellular" evidence="2">
    <location>
        <begin position="24"/>
        <end position="678"/>
    </location>
</feature>
<feature type="transmembrane region" description="Helical" evidence="2">
    <location>
        <begin position="679"/>
        <end position="699"/>
    </location>
</feature>
<feature type="topological domain" description="Cytoplasmic" evidence="2">
    <location>
        <begin position="700"/>
        <end position="859"/>
    </location>
</feature>
<feature type="region of interest" description="V1">
    <location>
        <begin position="113"/>
        <end position="163"/>
    </location>
</feature>
<feature type="region of interest" description="V2">
    <location>
        <begin position="164"/>
        <end position="205"/>
    </location>
</feature>
<feature type="region of interest" description="V3">
    <location>
        <begin position="305"/>
        <end position="337"/>
    </location>
</feature>
<feature type="region of interest" description="V4">
    <location>
        <begin position="399"/>
        <end position="422"/>
    </location>
</feature>
<feature type="region of interest" description="V5">
    <location>
        <begin position="465"/>
        <end position="471"/>
    </location>
</feature>
<feature type="region of interest" description="Fusion peptide" evidence="2">
    <location>
        <begin position="514"/>
        <end position="534"/>
    </location>
</feature>
<feature type="region of interest" description="Immunosuppression" evidence="1">
    <location>
        <begin position="577"/>
        <end position="593"/>
    </location>
</feature>
<feature type="region of interest" description="MPER; binding to GalCer" evidence="1">
    <location>
        <begin position="659"/>
        <end position="680"/>
    </location>
</feature>
<feature type="region of interest" description="Disordered" evidence="3">
    <location>
        <begin position="715"/>
        <end position="744"/>
    </location>
</feature>
<feature type="coiled-coil region" evidence="2">
    <location>
        <begin position="626"/>
        <end position="647"/>
    </location>
</feature>
<feature type="short sequence motif" description="YXXV motif; contains endocytosis signal" evidence="1">
    <location>
        <begin position="709"/>
        <end position="712"/>
    </location>
</feature>
<feature type="short sequence motif" description="Di-leucine internalization motif" evidence="1">
    <location>
        <begin position="858"/>
        <end position="859"/>
    </location>
</feature>
<feature type="site" description="Cleavage; by host furin" evidence="1">
    <location>
        <begin position="513"/>
        <end position="514"/>
    </location>
</feature>
<feature type="lipid moiety-binding region" description="S-palmitoyl cysteine; by host" evidence="1">
    <location>
        <position position="775"/>
    </location>
</feature>
<feature type="glycosylation site" description="N-linked (GlcNAc...) asparagine; by host" evidence="2">
    <location>
        <position position="37"/>
    </location>
</feature>
<feature type="glycosylation site" description="N-linked (GlcNAc...) asparagine; by host" evidence="2">
    <location>
        <position position="70"/>
    </location>
</feature>
<feature type="glycosylation site" description="N-linked (GlcNAc...) asparagine; by host" evidence="2">
    <location>
        <position position="112"/>
    </location>
</feature>
<feature type="glycosylation site" description="N-linked (GlcNAc...) asparagine; by host" evidence="2">
    <location>
        <position position="122"/>
    </location>
</feature>
<feature type="glycosylation site" description="N-linked (GlcNAc...) asparagine; by host" evidence="2">
    <location>
        <position position="142"/>
    </location>
</feature>
<feature type="glycosylation site" description="N-linked (GlcNAc...) asparagine; by host" evidence="2">
    <location>
        <position position="150"/>
    </location>
</feature>
<feature type="glycosylation site" description="N-linked (GlcNAc...) asparagine; by host" evidence="2">
    <location>
        <position position="165"/>
    </location>
</feature>
<feature type="glycosylation site" description="N-linked (GlcNAc...) asparagine; by host" evidence="2">
    <location>
        <position position="191"/>
    </location>
</feature>
<feature type="glycosylation site" description="N-linked (GlcNAc...) asparagine; by host" evidence="2">
    <location>
        <position position="206"/>
    </location>
</feature>
<feature type="glycosylation site" description="N-linked (GlcNAc...) asparagine; by host" evidence="2">
    <location>
        <position position="238"/>
    </location>
</feature>
<feature type="glycosylation site" description="N-linked (GlcNAc...) asparagine; by host" evidence="2">
    <location>
        <position position="241"/>
    </location>
</feature>
<feature type="glycosylation site" description="N-linked (GlcNAc...) asparagine; by host" evidence="2">
    <location>
        <position position="248"/>
    </location>
</feature>
<feature type="glycosylation site" description="N-linked (GlcNAc...) asparagine; by host" evidence="2">
    <location>
        <position position="272"/>
    </location>
</feature>
<feature type="glycosylation site" description="N-linked (GlcNAc...) asparagine; by host" evidence="2">
    <location>
        <position position="278"/>
    </location>
</feature>
<feature type="glycosylation site" description="N-linked (GlcNAc...) asparagine; by host" evidence="2">
    <location>
        <position position="289"/>
    </location>
</feature>
<feature type="glycosylation site" description="N-linked (GlcNAc...) asparagine; by host" evidence="2">
    <location>
        <position position="300"/>
    </location>
</feature>
<feature type="glycosylation site" description="N-linked (GlcNAc...) asparagine; by host" evidence="2">
    <location>
        <position position="310"/>
    </location>
</feature>
<feature type="glycosylation site" description="N-linked (GlcNAc...) asparagine; by host" evidence="2">
    <location>
        <position position="343"/>
    </location>
</feature>
<feature type="glycosylation site" description="N-linked (GlcNAc...) asparagine; by host" evidence="2">
    <location>
        <position position="367"/>
    </location>
</feature>
<feature type="glycosylation site" description="N-linked (GlcNAc...) asparagine; by host" evidence="2">
    <location>
        <position position="400"/>
    </location>
</feature>
<feature type="glycosylation site" description="N-linked (GlcNAc...) asparagine; by host" evidence="2">
    <location>
        <position position="410"/>
    </location>
</feature>
<feature type="glycosylation site" description="N-linked (GlcNAc...) asparagine; by host" evidence="2">
    <location>
        <position position="413"/>
    </location>
</feature>
<feature type="glycosylation site" description="N-linked (GlcNAc...) asparagine; by host" evidence="2">
    <location>
        <position position="450"/>
    </location>
</feature>
<feature type="glycosylation site" description="N-linked (GlcNAc...) asparagine; by host" evidence="2">
    <location>
        <position position="464"/>
    </location>
</feature>
<feature type="glycosylation site" description="N-linked (GlcNAc...) asparagine; by host" evidence="2">
    <location>
        <position position="468"/>
    </location>
</feature>
<feature type="glycosylation site" description="N-linked (GlcNAc...) asparagine; by host" evidence="2">
    <location>
        <position position="613"/>
    </location>
</feature>
<feature type="glycosylation site" description="N-linked (GlcNAc...) asparagine; by host" evidence="2">
    <location>
        <position position="622"/>
    </location>
</feature>
<feature type="glycosylation site" description="N-linked (GlcNAc...) asparagine; by host" evidence="2">
    <location>
        <position position="638"/>
    </location>
</feature>
<feature type="disulfide bond" evidence="1">
    <location>
        <begin position="44"/>
        <end position="57"/>
    </location>
</feature>
<feature type="disulfide bond" evidence="1">
    <location>
        <begin position="101"/>
        <end position="214"/>
    </location>
</feature>
<feature type="disulfide bond" evidence="1">
    <location>
        <begin position="108"/>
        <end position="205"/>
    </location>
</feature>
<feature type="disulfide bond" evidence="1">
    <location>
        <begin position="113"/>
        <end position="164"/>
    </location>
</feature>
<feature type="disulfide bond" evidence="1">
    <location>
        <begin position="227"/>
        <end position="257"/>
    </location>
</feature>
<feature type="disulfide bond" evidence="1">
    <location>
        <begin position="237"/>
        <end position="249"/>
    </location>
</feature>
<feature type="disulfide bond" evidence="1">
    <location>
        <begin position="305"/>
        <end position="338"/>
    </location>
</feature>
<feature type="disulfide bond" evidence="1">
    <location>
        <begin position="392"/>
        <end position="449"/>
    </location>
</feature>
<feature type="disulfide bond" evidence="1">
    <location>
        <begin position="399"/>
        <end position="422"/>
    </location>
</feature>
<comment type="function">
    <text evidence="1">The surface protein gp120 (SU) attaches the virus to the host lymphoid cell by binding to the primary receptor CD4. This interaction induces a structural rearrangement creating a high affinity binding site for a chemokine coreceptor like CXCR4 and/or CCR5. This peculiar 2 stage receptor-interaction strategy allows gp120 to maintain the highly conserved coreceptor-binding site in a cryptic conformation, protected from neutralizing antibodies. Since CD4 also displays a binding site for the disulfide-isomerase P4HB/PDI, a P4HB/PDI-CD4-CXCR4-gp120 complex may form. In that complex, P4HB/PDI could reach and reduce gp120 disulfide bonds, causing major conformational changes in gp120. TXN, another PDI family member could also be involved in disulfide rearrangements in Env during fusion. These changes are transmitted to the transmembrane protein gp41 and are thought to activate its fusogenic potential by unmasking its fusion peptide (By similarity).</text>
</comment>
<comment type="function">
    <text evidence="1">The surface protein gp120 is a ligand for CD209/DC-SIGN and CLEC4M/DC-SIGNR, which are respectively found on dendritic cells (DCs), and on endothelial cells of liver sinusoids and lymph node sinuses. These interactions allow capture of viral particles at mucosal surfaces by these cells and subsequent transmission to permissive cells. DCs are professional antigen presenting cells, critical for host immunity by inducing specific immune responses against a broad variety of pathogens. They act as sentinels in various tissues where they take up antigen, process it, and present it to T-cells following migration to lymphoid organs. HIV subverts the migration properties of dendritic cells to gain access to CD4+ T-cells in lymph nodes. Virus transmission to permissive T-cells occurs either in trans (without DCs infection, through viral capture and transmission), or in cis (following DCs productive infection, through the usual CD4-gp120 interaction), thereby inducing a robust infection. In trans infection, bound virions remain infectious over days and it is proposed that they are not degraded, but protected in non-lysosomal acidic organelles within the DCs close to the cell membrane thus contributing to the viral infectious potential during DCs' migration from the periphery to the lymphoid tissues. On arrival at lymphoid tissues, intact virions recycle back to DCs' cell surface allowing virus transmission to CD4+ T-cells. Virion capture also seems to lead to MHC-II-restricted viral antigen presentation, and probably to the activation of HIV-specific CD4+ cells (By similarity).</text>
</comment>
<comment type="function">
    <text evidence="1">The transmembrane protein gp41 (TM) acts as a class I viral fusion protein. Under the current model, the protein has at least 3 conformational states: pre-fusion native state, pre-hairpin intermediate state, and post-fusion hairpin state. During fusion of viral and target intracellular membranes, the coiled coil regions (heptad repeats) assume a trimer-of-hairpins structure, positioning the fusion peptide in close proximity to the C-terminal region of the ectodomain. The formation of this structure appears to drive apposition and subsequent fusion of viral and target cell membranes. Complete fusion occurs in host cell endosomes and is dynamin-dependent, however some lipid transfer might occur at the plasma membrane. The virus undergoes clathrin-dependent internalization long before endosomal fusion, thus minimizing the surface exposure of conserved viral epitopes during fusion and reducing the efficacy of inhibitors targeting these epitopes. Membranes fusion leads to delivery of the nucleocapsid into the cytoplasm (By similarity).</text>
</comment>
<comment type="function">
    <text evidence="1">The envelope glycoprotein gp160 precursor down-modulates cell surface CD4 antigen by interacting with it in the endoplasmic reticulum and blocking its transport to the cell surface.</text>
</comment>
<comment type="function">
    <text evidence="1">The gp120-gp41 heterodimer seems to contribute to T-cell depletion during HIV-1 infection. The envelope glycoproteins expressed on the surface of infected cells induce apoptosis through an interaction with uninfected cells expressing the receptor (CD4) and the coreceptors CXCR4 or CCR5. This type of bystander killing may be obtained by at least three distinct mechanisms. First, the interaction between the 2 cells can induce cellular fusion followed by nuclear fusion within the syncytium. Syncytia are condemned to die from apoptosis. Second, the 2 interacting cells may not fuse entirely and simply exchange plasma membrane lipids, after a sort of hemifusion process, followed by rapid death. Third, it is possible that virus-infected cells, on the point of undergoing apoptosis, fuse with CD4-expressing cells, in which case apoptosis is rapidly transmitted from one cell to the other and thus occurs in a sort of contagious fashion (By similarity).</text>
</comment>
<comment type="function">
    <text evidence="1">The gp120-gp41 heterodimer allows rapid transcytosis of the virus through CD4 negative cells such as simple epithelial monolayers of the intestinal, rectal and endocervical epithelial barriers. Both gp120 and gp41 specifically recognize glycosphingolipids galactosyl-ceramide (GalCer) or 3' sulfo-galactosyl-ceramide (GalS) present in the lipid rafts structures of epithelial cells. Binding to these alternative receptors allows the rapid transcytosis of the virus through the epithelial cells. This transcytotic vesicle-mediated transport of virions from the apical side to the basolateral side of the epithelial cells does not involve infection of the cells themselves (By similarity).</text>
</comment>
<comment type="subunit">
    <molecule>Surface protein gp120</molecule>
    <text evidence="1">The mature envelope protein (Env) consists of a homotrimer of non-covalently associated gp120-gp41 heterodimers. The resulting complex protrudes from the virus surface as a spike. There seems to be as few as 10 spikes on the average virion. Interacts with human CD4, CCR5 and CXCR4, to form a P4HB/PDI-CD4-CXCR4-gp120 complex. Gp120 also interacts with the C-type lectins CD209/DC-SIGN and CLEC4M/DC-SIGNR (collectively referred to as DC-SIGN(R)). Gp120 and gp41 interact with GalCer (By similarity).</text>
</comment>
<comment type="subunit">
    <molecule>Transmembrane protein gp41</molecule>
    <text evidence="1">The mature envelope protein (Env) consists of a homotrimer of non-covalently associated gp120-gp41 heterodimers. The resulting complex protrudes from the virus surface as a spike. There seems to be as few as 10 spikes on the average virion.</text>
</comment>
<comment type="subcellular location">
    <molecule>Transmembrane protein gp41</molecule>
    <subcellularLocation>
        <location evidence="1">Virion membrane</location>
        <topology evidence="1">Single-pass type I membrane protein</topology>
    </subcellularLocation>
    <subcellularLocation>
        <location evidence="1">Host cell membrane</location>
        <topology evidence="1">Single-pass type I membrane protein</topology>
    </subcellularLocation>
    <subcellularLocation>
        <location evidence="4">Host endosome membrane</location>
        <topology evidence="4">Single-pass type I membrane protein</topology>
    </subcellularLocation>
    <text evidence="1">It is probably concentrated at the site of budding and incorporated into the virions possibly by contacts between the cytoplasmic tail of Env and the N-terminus of Gag.</text>
</comment>
<comment type="subcellular location">
    <molecule>Surface protein gp120</molecule>
    <subcellularLocation>
        <location evidence="1">Virion membrane</location>
        <topology evidence="1">Peripheral membrane protein</topology>
    </subcellularLocation>
    <subcellularLocation>
        <location evidence="1">Host cell membrane</location>
        <topology evidence="1">Peripheral membrane protein</topology>
    </subcellularLocation>
    <subcellularLocation>
        <location evidence="4">Host endosome membrane</location>
        <topology evidence="4">Peripheral membrane protein</topology>
    </subcellularLocation>
    <text evidence="1">The surface protein is not anchored to the viral envelope, but associates with the extravirion surface through its binding to TM. It is probably concentrated at the site of budding and incorporated into the virions possibly by contacts between the cytoplasmic tail of Env and the N-terminus of Gag (By similarity).</text>
</comment>
<comment type="domain">
    <text evidence="1">Some of the most genetically diverse regions of the viral genome are present in Env. They are called variable regions 1 through 5 (V1 through V5). Coreceptor usage of gp120 is determined mainly by the primary structure of the third variable region (V3) in the outer domain of gp120. Binding to CCR5 involves a region adjacent in addition to V3 (By similarity).</text>
</comment>
<comment type="domain">
    <text evidence="1">The 17 amino acids long immunosuppressive region is present in many retroviral envelope proteins. Synthetic peptides derived from this relatively conserved sequence inhibit immune function in vitro and in vivo (By similarity).</text>
</comment>
<comment type="PTM">
    <text evidence="1">Specific enzymatic cleavages in vivo yield mature proteins. Envelope glycoproteins are synthesized as an inactive precursor that is heavily N-glycosylated and processed likely by host cell furin in the Golgi to yield the mature SU and TM proteins. The cleavage site between SU and TM requires the minimal sequence [KR]-X-[KR]-R (By similarity).</text>
</comment>
<comment type="PTM">
    <text evidence="1">Palmitoylation of the transmembrane protein and of Env polyprotein (prior to its proteolytic cleavage) is essential for their association with host cell membrane lipid rafts. Palmitoylation is therefore required for envelope trafficking to classical lipid rafts, but not for viral replication (By similarity).</text>
</comment>
<comment type="miscellaneous">
    <text>Some HIV-2 isolates have been described that can infect cells independently of CD4, using CXCR4 as primary receptor. These isolates may have an exposed coreceptor binding site.</text>
</comment>
<sequence length="859" mass="98607">MAYFSSRLPIALLLIGISGFVCKQYVTVFYGIPAWRNATVPLICATTNRDTWGTVQCLPDNGDYTEIRLNITEAFDAWDNTVTQQAVDDVWRLFETSIKPCVKLTPLCVAMNCSKTETNPGNASSTTTTKPTTTSRGLKTINETDPCIKNDSCTGLGEEEIMQCNFSMTGLRRDELKQYKDTWYSEDLECNNTRKYTSRCYIRTCNTTIIQESCDKHYWDSLRFRYCAPPGFFLLRCNDTNYSGFMPNCSKVVASSCTRMMETQSSTWFGFNGTRAENRTYIYWHEKDNRTIISLNTYYNLSIHCKRPGNKTVVPIRTVSGLLFHSQPINKRPRQAWCWFKGNWTEAIKEVKRTIIKHPRYKGGAKNITSVKLVSEHGKGSDPETTYMWTNCRGEFLYCNMTWFLNWVENKTNTTRRNYAPCHIRQIINTWHKVGKNIYLPPREGELSCNSTVTSLIANINSDNSTTNISVSAEVSELYRLELGDYKLVEITPIGFAPTDVRRYSSVKPRNKRGVMVLGFLGFLAMAGSAMGATSLTLSAQSRTLLAGIVQQQQQPVDVVKRQQELLRLTVWGTKNLQARVTAIEKYLKDQAQLNSWGCAFRQVCHTTVPWPNETLTPNWNNMTWQQWEKQVHFLDANITALLEEAQIQQEKNMYELQKINSWDVFGNWFDLTSWIKYIHLGLYIVAGLVVLRIVVYIVQMLARLRKGYRPVFSSPPSYTQQIPIRKDRGQPANEETEEGGGNDGDYRSWPWQIEYIHFLLRQLRNLLIWLYNGCRTLLLKTFQILHQISTNLQPLRLPVAYLQYGISWFQEALRAAARATGETLASAGETLWEALRRAARAIIAIPRRIRQGLELTLL</sequence>
<organism>
    <name type="scientific">Human immunodeficiency virus type 2 subtype B (isolate D205)</name>
    <name type="common">HIV-2</name>
    <dbReference type="NCBI Taxonomy" id="11716"/>
    <lineage>
        <taxon>Viruses</taxon>
        <taxon>Riboviria</taxon>
        <taxon>Pararnavirae</taxon>
        <taxon>Artverviricota</taxon>
        <taxon>Revtraviricetes</taxon>
        <taxon>Ortervirales</taxon>
        <taxon>Retroviridae</taxon>
        <taxon>Orthoretrovirinae</taxon>
        <taxon>Lentivirus</taxon>
        <taxon>Human immunodeficiency virus 2</taxon>
    </lineage>
</organism>
<keyword id="KW-0014">AIDS</keyword>
<keyword id="KW-0053">Apoptosis</keyword>
<keyword id="KW-1165">Clathrin-mediated endocytosis of virus by host</keyword>
<keyword id="KW-0165">Cleavage on pair of basic residues</keyword>
<keyword id="KW-0175">Coiled coil</keyword>
<keyword id="KW-1015">Disulfide bond</keyword>
<keyword id="KW-1170">Fusion of virus membrane with host endosomal membrane</keyword>
<keyword id="KW-1168">Fusion of virus membrane with host membrane</keyword>
<keyword id="KW-0325">Glycoprotein</keyword>
<keyword id="KW-1032">Host cell membrane</keyword>
<keyword id="KW-1039">Host endosome</keyword>
<keyword id="KW-1043">Host membrane</keyword>
<keyword id="KW-0945">Host-virus interaction</keyword>
<keyword id="KW-1090">Inhibition of host innate immune response by virus</keyword>
<keyword id="KW-1084">Inhibition of host tetherin by virus</keyword>
<keyword id="KW-0449">Lipoprotein</keyword>
<keyword id="KW-0472">Membrane</keyword>
<keyword id="KW-0564">Palmitate</keyword>
<keyword id="KW-0732">Signal</keyword>
<keyword id="KW-0812">Transmembrane</keyword>
<keyword id="KW-1133">Transmembrane helix</keyword>
<keyword id="KW-1161">Viral attachment to host cell</keyword>
<keyword id="KW-0261">Viral envelope protein</keyword>
<keyword id="KW-0899">Viral immunoevasion</keyword>
<keyword id="KW-1162">Viral penetration into host cytoplasm</keyword>
<keyword id="KW-0946">Virion</keyword>
<keyword id="KW-1164">Virus endocytosis by host</keyword>
<keyword id="KW-1160">Virus entry into host cell</keyword>
<reference key="1">
    <citation type="submission" date="1992-04" db="EMBL/GenBank/DDBJ databases">
        <authorList>
            <person name="Dietrich U."/>
        </authorList>
    </citation>
    <scope>NUCLEOTIDE SEQUENCE [GENOMIC DNA]</scope>
</reference>
<reference key="2">
    <citation type="journal article" date="1989" name="Nature">
        <title>A highly divergent HIV-2-related isolate.</title>
        <authorList>
            <person name="Dietrich U."/>
            <person name="Adamski M."/>
            <person name="Kreutz R."/>
            <person name="Seipp A."/>
            <person name="Kuehnel H."/>
            <person name="Ruebsamen-Waigmann H."/>
        </authorList>
    </citation>
    <scope>NUCLEOTIDE SEQUENCE [GENOMIC DNA] OF 1-207</scope>
</reference>
<reference key="3">
    <citation type="journal article" date="2002" name="J. Gen. Virol.">
        <title>Human immunodeficiency virus type 2.</title>
        <authorList>
            <person name="Reeves J.D."/>
            <person name="Doms R.W."/>
        </authorList>
    </citation>
    <scope>REVIEW</scope>
</reference>
<accession>P15831</accession>
<name>ENV_HV2D2</name>
<gene>
    <name type="primary">env</name>
</gene>
<organismHost>
    <name type="scientific">Homo sapiens</name>
    <name type="common">Human</name>
    <dbReference type="NCBI Taxonomy" id="9606"/>
</organismHost>
<evidence type="ECO:0000250" key="1"/>
<evidence type="ECO:0000255" key="2"/>
<evidence type="ECO:0000256" key="3">
    <source>
        <dbReference type="SAM" id="MobiDB-lite"/>
    </source>
</evidence>
<evidence type="ECO:0000305" key="4"/>
<proteinExistence type="inferred from homology"/>
<protein>
    <recommendedName>
        <fullName>Envelope glycoprotein gp160</fullName>
    </recommendedName>
    <alternativeName>
        <fullName>Env polyprotein</fullName>
    </alternativeName>
    <component>
        <recommendedName>
            <fullName>Surface protein gp120</fullName>
            <shortName>SU</shortName>
        </recommendedName>
        <alternativeName>
            <fullName>Glycoprotein 120</fullName>
            <shortName>gp120</shortName>
        </alternativeName>
    </component>
    <component>
        <recommendedName>
            <fullName>Transmembrane protein gp41</fullName>
            <shortName>TM</shortName>
        </recommendedName>
        <alternativeName>
            <fullName>Glycoprotein 41</fullName>
            <shortName>gp41</shortName>
        </alternativeName>
    </component>
</protein>